<proteinExistence type="inferred from homology"/>
<feature type="chain" id="PRO_5000210644" description="UPF0391 membrane protein Pnap_0032">
    <location>
        <begin position="1"/>
        <end position="61"/>
    </location>
</feature>
<feature type="transmembrane region" description="Helical" evidence="1">
    <location>
        <begin position="5"/>
        <end position="25"/>
    </location>
</feature>
<feature type="transmembrane region" description="Helical" evidence="1">
    <location>
        <begin position="33"/>
        <end position="53"/>
    </location>
</feature>
<sequence>MIKYAIIFAVISLIAGALGFSGVAAGAAGIAKVLFGLFLILAVIFIVLAALGVGAAKKMMK</sequence>
<keyword id="KW-1003">Cell membrane</keyword>
<keyword id="KW-0472">Membrane</keyword>
<keyword id="KW-1185">Reference proteome</keyword>
<keyword id="KW-0812">Transmembrane</keyword>
<keyword id="KW-1133">Transmembrane helix</keyword>
<gene>
    <name type="ordered locus">Pnap_0032</name>
</gene>
<protein>
    <recommendedName>
        <fullName evidence="1">UPF0391 membrane protein Pnap_0032</fullName>
    </recommendedName>
</protein>
<reference key="1">
    <citation type="journal article" date="2009" name="Environ. Microbiol.">
        <title>The genome of Polaromonas naphthalenivorans strain CJ2, isolated from coal tar-contaminated sediment, reveals physiological and metabolic versatility and evolution through extensive horizontal gene transfer.</title>
        <authorList>
            <person name="Yagi J.M."/>
            <person name="Sims D."/>
            <person name="Brettin T."/>
            <person name="Bruce D."/>
            <person name="Madsen E.L."/>
        </authorList>
    </citation>
    <scope>NUCLEOTIDE SEQUENCE [LARGE SCALE GENOMIC DNA]</scope>
    <source>
        <strain>CJ2</strain>
    </source>
</reference>
<dbReference type="EMBL" id="CP000529">
    <property type="protein sequence ID" value="ABM35358.1"/>
    <property type="molecule type" value="Genomic_DNA"/>
</dbReference>
<dbReference type="RefSeq" id="WP_011799468.1">
    <property type="nucleotide sequence ID" value="NC_008781.1"/>
</dbReference>
<dbReference type="SMR" id="A1VI80"/>
<dbReference type="STRING" id="365044.Pnap_0032"/>
<dbReference type="KEGG" id="pna:Pnap_0032"/>
<dbReference type="eggNOG" id="COG5487">
    <property type="taxonomic scope" value="Bacteria"/>
</dbReference>
<dbReference type="HOGENOM" id="CLU_187346_1_1_4"/>
<dbReference type="Proteomes" id="UP000000644">
    <property type="component" value="Chromosome"/>
</dbReference>
<dbReference type="GO" id="GO:0005886">
    <property type="term" value="C:plasma membrane"/>
    <property type="evidence" value="ECO:0007669"/>
    <property type="project" value="UniProtKB-SubCell"/>
</dbReference>
<dbReference type="HAMAP" id="MF_01361">
    <property type="entry name" value="UPF0391"/>
    <property type="match status" value="1"/>
</dbReference>
<dbReference type="InterPro" id="IPR009760">
    <property type="entry name" value="DUF1328"/>
</dbReference>
<dbReference type="NCBIfam" id="NF010235">
    <property type="entry name" value="PRK13682.2-6"/>
    <property type="match status" value="1"/>
</dbReference>
<dbReference type="Pfam" id="PF07043">
    <property type="entry name" value="DUF1328"/>
    <property type="match status" value="1"/>
</dbReference>
<dbReference type="PIRSF" id="PIRSF036466">
    <property type="entry name" value="UCP036466"/>
    <property type="match status" value="1"/>
</dbReference>
<comment type="subcellular location">
    <subcellularLocation>
        <location evidence="1">Cell membrane</location>
        <topology evidence="1">Multi-pass membrane protein</topology>
    </subcellularLocation>
</comment>
<comment type="similarity">
    <text evidence="1">Belongs to the UPF0391 family.</text>
</comment>
<evidence type="ECO:0000255" key="1">
    <source>
        <dbReference type="HAMAP-Rule" id="MF_01361"/>
    </source>
</evidence>
<organism>
    <name type="scientific">Polaromonas naphthalenivorans (strain CJ2)</name>
    <dbReference type="NCBI Taxonomy" id="365044"/>
    <lineage>
        <taxon>Bacteria</taxon>
        <taxon>Pseudomonadati</taxon>
        <taxon>Pseudomonadota</taxon>
        <taxon>Betaproteobacteria</taxon>
        <taxon>Burkholderiales</taxon>
        <taxon>Comamonadaceae</taxon>
        <taxon>Polaromonas</taxon>
    </lineage>
</organism>
<name>Y032_POLNA</name>
<accession>A1VI80</accession>